<comment type="function">
    <text evidence="1">Could be a mediator in iron transactions between iron acquisition and iron-requiring processes, such as synthesis and/or repair of Fe-S clusters in biosynthetic enzymes.</text>
</comment>
<comment type="similarity">
    <text evidence="1">Belongs to the Fe(2+)-trafficking protein family.</text>
</comment>
<keyword id="KW-0408">Iron</keyword>
<keyword id="KW-1185">Reference proteome</keyword>
<protein>
    <recommendedName>
        <fullName evidence="1">Probable Fe(2+)-trafficking protein</fullName>
    </recommendedName>
</protein>
<name>FETP_SHEAM</name>
<gene>
    <name type="ordered locus">Sama_2491</name>
</gene>
<feature type="chain" id="PRO_1000045060" description="Probable Fe(2+)-trafficking protein">
    <location>
        <begin position="1"/>
        <end position="91"/>
    </location>
</feature>
<organism>
    <name type="scientific">Shewanella amazonensis (strain ATCC BAA-1098 / SB2B)</name>
    <dbReference type="NCBI Taxonomy" id="326297"/>
    <lineage>
        <taxon>Bacteria</taxon>
        <taxon>Pseudomonadati</taxon>
        <taxon>Pseudomonadota</taxon>
        <taxon>Gammaproteobacteria</taxon>
        <taxon>Alteromonadales</taxon>
        <taxon>Shewanellaceae</taxon>
        <taxon>Shewanella</taxon>
    </lineage>
</organism>
<evidence type="ECO:0000255" key="1">
    <source>
        <dbReference type="HAMAP-Rule" id="MF_00686"/>
    </source>
</evidence>
<sequence length="91" mass="10738">MARTVQCVYLGKEAEGLDFQLYPGELGKRIFDTISKEAWGEWQKKQTMLINEKKLNMMNMDHRKLLEEQMQLFLFEGKDVQIEGYVPPKPE</sequence>
<accession>A1S8I8</accession>
<dbReference type="EMBL" id="CP000507">
    <property type="protein sequence ID" value="ABM00695.1"/>
    <property type="molecule type" value="Genomic_DNA"/>
</dbReference>
<dbReference type="RefSeq" id="WP_011760601.1">
    <property type="nucleotide sequence ID" value="NC_008700.1"/>
</dbReference>
<dbReference type="SMR" id="A1S8I8"/>
<dbReference type="STRING" id="326297.Sama_2491"/>
<dbReference type="KEGG" id="saz:Sama_2491"/>
<dbReference type="eggNOG" id="COG2924">
    <property type="taxonomic scope" value="Bacteria"/>
</dbReference>
<dbReference type="HOGENOM" id="CLU_170994_0_0_6"/>
<dbReference type="OrthoDB" id="9804318at2"/>
<dbReference type="Proteomes" id="UP000009175">
    <property type="component" value="Chromosome"/>
</dbReference>
<dbReference type="GO" id="GO:0005829">
    <property type="term" value="C:cytosol"/>
    <property type="evidence" value="ECO:0007669"/>
    <property type="project" value="TreeGrafter"/>
</dbReference>
<dbReference type="GO" id="GO:0005506">
    <property type="term" value="F:iron ion binding"/>
    <property type="evidence" value="ECO:0007669"/>
    <property type="project" value="UniProtKB-UniRule"/>
</dbReference>
<dbReference type="GO" id="GO:0034599">
    <property type="term" value="P:cellular response to oxidative stress"/>
    <property type="evidence" value="ECO:0007669"/>
    <property type="project" value="TreeGrafter"/>
</dbReference>
<dbReference type="FunFam" id="1.10.3880.10:FF:000001">
    <property type="entry name" value="Probable Fe(2+)-trafficking protein"/>
    <property type="match status" value="1"/>
</dbReference>
<dbReference type="Gene3D" id="1.10.3880.10">
    <property type="entry name" value="Fe(II) trafficking protein YggX"/>
    <property type="match status" value="1"/>
</dbReference>
<dbReference type="HAMAP" id="MF_00686">
    <property type="entry name" value="Fe_traffic_YggX"/>
    <property type="match status" value="1"/>
</dbReference>
<dbReference type="InterPro" id="IPR007457">
    <property type="entry name" value="Fe_traffick_prot_YggX"/>
</dbReference>
<dbReference type="InterPro" id="IPR036766">
    <property type="entry name" value="Fe_traffick_prot_YggX_sf"/>
</dbReference>
<dbReference type="NCBIfam" id="NF003817">
    <property type="entry name" value="PRK05408.1"/>
    <property type="match status" value="1"/>
</dbReference>
<dbReference type="PANTHER" id="PTHR36965">
    <property type="entry name" value="FE(2+)-TRAFFICKING PROTEIN-RELATED"/>
    <property type="match status" value="1"/>
</dbReference>
<dbReference type="PANTHER" id="PTHR36965:SF1">
    <property type="entry name" value="FE(2+)-TRAFFICKING PROTEIN-RELATED"/>
    <property type="match status" value="1"/>
</dbReference>
<dbReference type="Pfam" id="PF04362">
    <property type="entry name" value="Iron_traffic"/>
    <property type="match status" value="1"/>
</dbReference>
<dbReference type="PIRSF" id="PIRSF029827">
    <property type="entry name" value="Fe_traffic_YggX"/>
    <property type="match status" value="1"/>
</dbReference>
<dbReference type="SUPFAM" id="SSF111148">
    <property type="entry name" value="YggX-like"/>
    <property type="match status" value="1"/>
</dbReference>
<proteinExistence type="inferred from homology"/>
<reference key="1">
    <citation type="submission" date="2006-12" db="EMBL/GenBank/DDBJ databases">
        <title>Complete sequence of Shewanella amazonensis SB2B.</title>
        <authorList>
            <consortium name="US DOE Joint Genome Institute"/>
            <person name="Copeland A."/>
            <person name="Lucas S."/>
            <person name="Lapidus A."/>
            <person name="Barry K."/>
            <person name="Detter J.C."/>
            <person name="Glavina del Rio T."/>
            <person name="Hammon N."/>
            <person name="Israni S."/>
            <person name="Dalin E."/>
            <person name="Tice H."/>
            <person name="Pitluck S."/>
            <person name="Munk A.C."/>
            <person name="Brettin T."/>
            <person name="Bruce D."/>
            <person name="Han C."/>
            <person name="Tapia R."/>
            <person name="Gilna P."/>
            <person name="Schmutz J."/>
            <person name="Larimer F."/>
            <person name="Land M."/>
            <person name="Hauser L."/>
            <person name="Kyrpides N."/>
            <person name="Mikhailova N."/>
            <person name="Fredrickson J."/>
            <person name="Richardson P."/>
        </authorList>
    </citation>
    <scope>NUCLEOTIDE SEQUENCE [LARGE SCALE GENOMIC DNA]</scope>
    <source>
        <strain>ATCC BAA-1098 / SB2B</strain>
    </source>
</reference>